<sequence length="60" mass="6820">MDHRLLEIVACPVCNGKLYFNKENLELVCKVDNLAYPVRDGIPVLLENEARPLSIDEKHA</sequence>
<feature type="chain" id="PRO_1000138339" description="UPF0434 protein YPTS_1526">
    <location>
        <begin position="1"/>
        <end position="60"/>
    </location>
</feature>
<comment type="similarity">
    <text evidence="1">Belongs to the UPF0434 family.</text>
</comment>
<protein>
    <recommendedName>
        <fullName evidence="1">UPF0434 protein YPTS_1526</fullName>
    </recommendedName>
</protein>
<evidence type="ECO:0000255" key="1">
    <source>
        <dbReference type="HAMAP-Rule" id="MF_01187"/>
    </source>
</evidence>
<reference key="1">
    <citation type="submission" date="2008-04" db="EMBL/GenBank/DDBJ databases">
        <title>Complete sequence of Yersinia pseudotuberculosis PB1/+.</title>
        <authorList>
            <person name="Copeland A."/>
            <person name="Lucas S."/>
            <person name="Lapidus A."/>
            <person name="Glavina del Rio T."/>
            <person name="Dalin E."/>
            <person name="Tice H."/>
            <person name="Bruce D."/>
            <person name="Goodwin L."/>
            <person name="Pitluck S."/>
            <person name="Munk A.C."/>
            <person name="Brettin T."/>
            <person name="Detter J.C."/>
            <person name="Han C."/>
            <person name="Tapia R."/>
            <person name="Schmutz J."/>
            <person name="Larimer F."/>
            <person name="Land M."/>
            <person name="Hauser L."/>
            <person name="Challacombe J.F."/>
            <person name="Green L."/>
            <person name="Lindler L.E."/>
            <person name="Nikolich M.P."/>
            <person name="Richardson P."/>
        </authorList>
    </citation>
    <scope>NUCLEOTIDE SEQUENCE [LARGE SCALE GENOMIC DNA]</scope>
    <source>
        <strain>PB1/+</strain>
    </source>
</reference>
<organism>
    <name type="scientific">Yersinia pseudotuberculosis serotype IB (strain PB1/+)</name>
    <dbReference type="NCBI Taxonomy" id="502801"/>
    <lineage>
        <taxon>Bacteria</taxon>
        <taxon>Pseudomonadati</taxon>
        <taxon>Pseudomonadota</taxon>
        <taxon>Gammaproteobacteria</taxon>
        <taxon>Enterobacterales</taxon>
        <taxon>Yersiniaceae</taxon>
        <taxon>Yersinia</taxon>
    </lineage>
</organism>
<name>Y1526_YERPB</name>
<proteinExistence type="inferred from homology"/>
<accession>B2KA33</accession>
<gene>
    <name type="ordered locus">YPTS_1526</name>
</gene>
<dbReference type="EMBL" id="CP001048">
    <property type="protein sequence ID" value="ACC88498.1"/>
    <property type="molecule type" value="Genomic_DNA"/>
</dbReference>
<dbReference type="RefSeq" id="WP_002211315.1">
    <property type="nucleotide sequence ID" value="NZ_CP009780.1"/>
</dbReference>
<dbReference type="SMR" id="B2KA33"/>
<dbReference type="KEGG" id="ypb:YPTS_1526"/>
<dbReference type="PATRIC" id="fig|502801.10.peg.892"/>
<dbReference type="GO" id="GO:0005829">
    <property type="term" value="C:cytosol"/>
    <property type="evidence" value="ECO:0007669"/>
    <property type="project" value="TreeGrafter"/>
</dbReference>
<dbReference type="FunFam" id="2.20.25.10:FF:000002">
    <property type="entry name" value="UPF0434 protein YcaR"/>
    <property type="match status" value="1"/>
</dbReference>
<dbReference type="Gene3D" id="2.20.25.10">
    <property type="match status" value="1"/>
</dbReference>
<dbReference type="HAMAP" id="MF_01187">
    <property type="entry name" value="UPF0434"/>
    <property type="match status" value="1"/>
</dbReference>
<dbReference type="InterPro" id="IPR005651">
    <property type="entry name" value="Trm112-like"/>
</dbReference>
<dbReference type="PANTHER" id="PTHR33505:SF4">
    <property type="entry name" value="PROTEIN PREY, MITOCHONDRIAL"/>
    <property type="match status" value="1"/>
</dbReference>
<dbReference type="PANTHER" id="PTHR33505">
    <property type="entry name" value="ZGC:162634"/>
    <property type="match status" value="1"/>
</dbReference>
<dbReference type="Pfam" id="PF03966">
    <property type="entry name" value="Trm112p"/>
    <property type="match status" value="1"/>
</dbReference>
<dbReference type="SUPFAM" id="SSF158997">
    <property type="entry name" value="Trm112p-like"/>
    <property type="match status" value="1"/>
</dbReference>